<reference key="1">
    <citation type="journal article" date="2007" name="PLoS Genet.">
        <title>The complete genome sequence of Yersinia pseudotuberculosis IP31758, the causative agent of Far East scarlet-like fever.</title>
        <authorList>
            <person name="Eppinger M."/>
            <person name="Rosovitz M.J."/>
            <person name="Fricke W.F."/>
            <person name="Rasko D.A."/>
            <person name="Kokorina G."/>
            <person name="Fayolle C."/>
            <person name="Lindler L.E."/>
            <person name="Carniel E."/>
            <person name="Ravel J."/>
        </authorList>
    </citation>
    <scope>NUCLEOTIDE SEQUENCE [LARGE SCALE GENOMIC DNA]</scope>
    <source>
        <strain>IP 31758</strain>
    </source>
</reference>
<proteinExistence type="inferred from homology"/>
<dbReference type="EMBL" id="CP000720">
    <property type="protein sequence ID" value="ABS46321.1"/>
    <property type="molecule type" value="Genomic_DNA"/>
</dbReference>
<dbReference type="RefSeq" id="WP_002209461.1">
    <property type="nucleotide sequence ID" value="NC_009708.1"/>
</dbReference>
<dbReference type="SMR" id="A7FLQ4"/>
<dbReference type="GeneID" id="96664344"/>
<dbReference type="KEGG" id="ypi:YpsIP31758_3225"/>
<dbReference type="HOGENOM" id="CLU_103507_2_1_6"/>
<dbReference type="Proteomes" id="UP000002412">
    <property type="component" value="Chromosome"/>
</dbReference>
<dbReference type="GO" id="GO:0022625">
    <property type="term" value="C:cytosolic large ribosomal subunit"/>
    <property type="evidence" value="ECO:0007669"/>
    <property type="project" value="TreeGrafter"/>
</dbReference>
<dbReference type="GO" id="GO:0003735">
    <property type="term" value="F:structural constituent of ribosome"/>
    <property type="evidence" value="ECO:0007669"/>
    <property type="project" value="InterPro"/>
</dbReference>
<dbReference type="GO" id="GO:0006412">
    <property type="term" value="P:translation"/>
    <property type="evidence" value="ECO:0007669"/>
    <property type="project" value="UniProtKB-UniRule"/>
</dbReference>
<dbReference type="FunFam" id="2.30.30.790:FF:000001">
    <property type="entry name" value="50S ribosomal protein L19"/>
    <property type="match status" value="1"/>
</dbReference>
<dbReference type="Gene3D" id="2.30.30.790">
    <property type="match status" value="1"/>
</dbReference>
<dbReference type="HAMAP" id="MF_00402">
    <property type="entry name" value="Ribosomal_bL19"/>
    <property type="match status" value="1"/>
</dbReference>
<dbReference type="InterPro" id="IPR001857">
    <property type="entry name" value="Ribosomal_bL19"/>
</dbReference>
<dbReference type="InterPro" id="IPR018257">
    <property type="entry name" value="Ribosomal_bL19_CS"/>
</dbReference>
<dbReference type="InterPro" id="IPR038657">
    <property type="entry name" value="Ribosomal_bL19_sf"/>
</dbReference>
<dbReference type="InterPro" id="IPR008991">
    <property type="entry name" value="Translation_prot_SH3-like_sf"/>
</dbReference>
<dbReference type="NCBIfam" id="TIGR01024">
    <property type="entry name" value="rplS_bact"/>
    <property type="match status" value="1"/>
</dbReference>
<dbReference type="PANTHER" id="PTHR15680:SF9">
    <property type="entry name" value="LARGE RIBOSOMAL SUBUNIT PROTEIN BL19M"/>
    <property type="match status" value="1"/>
</dbReference>
<dbReference type="PANTHER" id="PTHR15680">
    <property type="entry name" value="RIBOSOMAL PROTEIN L19"/>
    <property type="match status" value="1"/>
</dbReference>
<dbReference type="Pfam" id="PF01245">
    <property type="entry name" value="Ribosomal_L19"/>
    <property type="match status" value="1"/>
</dbReference>
<dbReference type="PIRSF" id="PIRSF002191">
    <property type="entry name" value="Ribosomal_L19"/>
    <property type="match status" value="1"/>
</dbReference>
<dbReference type="PRINTS" id="PR00061">
    <property type="entry name" value="RIBOSOMALL19"/>
</dbReference>
<dbReference type="SUPFAM" id="SSF50104">
    <property type="entry name" value="Translation proteins SH3-like domain"/>
    <property type="match status" value="1"/>
</dbReference>
<dbReference type="PROSITE" id="PS01015">
    <property type="entry name" value="RIBOSOMAL_L19"/>
    <property type="match status" value="1"/>
</dbReference>
<protein>
    <recommendedName>
        <fullName evidence="1">Large ribosomal subunit protein bL19</fullName>
    </recommendedName>
    <alternativeName>
        <fullName evidence="2">50S ribosomal protein L19</fullName>
    </alternativeName>
</protein>
<evidence type="ECO:0000255" key="1">
    <source>
        <dbReference type="HAMAP-Rule" id="MF_00402"/>
    </source>
</evidence>
<evidence type="ECO:0000305" key="2"/>
<comment type="function">
    <text evidence="1">This protein is located at the 30S-50S ribosomal subunit interface and may play a role in the structure and function of the aminoacyl-tRNA binding site.</text>
</comment>
<comment type="similarity">
    <text evidence="1">Belongs to the bacterial ribosomal protein bL19 family.</text>
</comment>
<gene>
    <name evidence="1" type="primary">rplS</name>
    <name type="ordered locus">YpsIP31758_3225</name>
</gene>
<keyword id="KW-0687">Ribonucleoprotein</keyword>
<keyword id="KW-0689">Ribosomal protein</keyword>
<feature type="chain" id="PRO_1000060808" description="Large ribosomal subunit protein bL19">
    <location>
        <begin position="1"/>
        <end position="115"/>
    </location>
</feature>
<sequence length="115" mass="13090">MSNIIKQIEQEQMKQDVPAFRPGDSVEVKVWVVEGSKKRLQAFEGVVIAIRNRGLHSAFTVRKISNGEGVERVFQTHSPVIDSITVKRRGAVRQAKLYYLRERTGKSARIKERLG</sequence>
<organism>
    <name type="scientific">Yersinia pseudotuberculosis serotype O:1b (strain IP 31758)</name>
    <dbReference type="NCBI Taxonomy" id="349747"/>
    <lineage>
        <taxon>Bacteria</taxon>
        <taxon>Pseudomonadati</taxon>
        <taxon>Pseudomonadota</taxon>
        <taxon>Gammaproteobacteria</taxon>
        <taxon>Enterobacterales</taxon>
        <taxon>Yersiniaceae</taxon>
        <taxon>Yersinia</taxon>
    </lineage>
</organism>
<accession>A7FLQ4</accession>
<name>RL19_YERP3</name>